<organism>
    <name type="scientific">Shewanella frigidimarina (strain NCIMB 400)</name>
    <dbReference type="NCBI Taxonomy" id="318167"/>
    <lineage>
        <taxon>Bacteria</taxon>
        <taxon>Pseudomonadati</taxon>
        <taxon>Pseudomonadota</taxon>
        <taxon>Gammaproteobacteria</taxon>
        <taxon>Alteromonadales</taxon>
        <taxon>Shewanellaceae</taxon>
        <taxon>Shewanella</taxon>
    </lineage>
</organism>
<comment type="function">
    <text evidence="1">Catalyzes the formation of phosphatidylethanolamine (PtdEtn) from phosphatidylserine (PtdSer).</text>
</comment>
<comment type="catalytic activity">
    <reaction evidence="1">
        <text>a 1,2-diacyl-sn-glycero-3-phospho-L-serine + H(+) = a 1,2-diacyl-sn-glycero-3-phosphoethanolamine + CO2</text>
        <dbReference type="Rhea" id="RHEA:20828"/>
        <dbReference type="ChEBI" id="CHEBI:15378"/>
        <dbReference type="ChEBI" id="CHEBI:16526"/>
        <dbReference type="ChEBI" id="CHEBI:57262"/>
        <dbReference type="ChEBI" id="CHEBI:64612"/>
        <dbReference type="EC" id="4.1.1.65"/>
    </reaction>
</comment>
<comment type="cofactor">
    <cofactor evidence="1">
        <name>pyruvate</name>
        <dbReference type="ChEBI" id="CHEBI:15361"/>
    </cofactor>
    <text evidence="1">Binds 1 pyruvoyl group covalently per subunit.</text>
</comment>
<comment type="pathway">
    <text evidence="1">Phospholipid metabolism; phosphatidylethanolamine biosynthesis; phosphatidylethanolamine from CDP-diacylglycerol: step 2/2.</text>
</comment>
<comment type="subunit">
    <text evidence="1">Heterodimer of a large membrane-associated beta subunit and a small pyruvoyl-containing alpha subunit.</text>
</comment>
<comment type="subcellular location">
    <subcellularLocation>
        <location evidence="1">Cell membrane</location>
        <topology evidence="1">Peripheral membrane protein</topology>
    </subcellularLocation>
</comment>
<comment type="PTM">
    <text evidence="1">Is synthesized initially as an inactive proenzyme. Formation of the active enzyme involves a self-maturation process in which the active site pyruvoyl group is generated from an internal serine residue via an autocatalytic post-translational modification. Two non-identical subunits are generated from the proenzyme in this reaction, and the pyruvate is formed at the N-terminus of the alpha chain, which is derived from the carboxyl end of the proenzyme. The autoendoproteolytic cleavage occurs by a canonical serine protease mechanism, in which the side chain hydroxyl group of the serine supplies its oxygen atom to form the C-terminus of the beta chain, while the remainder of the serine residue undergoes an oxidative deamination to produce ammonia and the pyruvoyl prosthetic group on the alpha chain. During this reaction, the Ser that is part of the protease active site of the proenzyme becomes the pyruvoyl prosthetic group, which constitutes an essential element of the active site of the mature decarboxylase.</text>
</comment>
<comment type="similarity">
    <text evidence="1">Belongs to the phosphatidylserine decarboxylase family. PSD-B subfamily. Prokaryotic type I sub-subfamily.</text>
</comment>
<keyword id="KW-1003">Cell membrane</keyword>
<keyword id="KW-0210">Decarboxylase</keyword>
<keyword id="KW-0444">Lipid biosynthesis</keyword>
<keyword id="KW-0443">Lipid metabolism</keyword>
<keyword id="KW-0456">Lyase</keyword>
<keyword id="KW-0472">Membrane</keyword>
<keyword id="KW-0594">Phospholipid biosynthesis</keyword>
<keyword id="KW-1208">Phospholipid metabolism</keyword>
<keyword id="KW-0670">Pyruvate</keyword>
<keyword id="KW-1185">Reference proteome</keyword>
<keyword id="KW-0865">Zymogen</keyword>
<name>PSD_SHEFN</name>
<sequence>MDSIKIALQYMLPKHFLSRLVGKFAAAEAGAITTAVIKWFIKQYKIDMSEAQQPEPEAYKTFNAFFTRALKPELRPICQESNMMAHPVDGAVSQCGPIEAGNIFQAKGHSYTSEALLGGNKTDAARFDGGDFATIYLAPKDYHRLHMPITGTLSKMTYVPGDLFSVNPLTAQNVPGLFARNERVVAIFETEVGPLAMVLVGATIVASIETIWSGTVTPPGGKQVFSWDYPTTGPEAVTLEKGAEMGRFKLGSTVVMLFAQDAIETFADGVEPGETTRMGQPFARLKQQ</sequence>
<protein>
    <recommendedName>
        <fullName evidence="1">Phosphatidylserine decarboxylase proenzyme</fullName>
        <ecNumber evidence="1">4.1.1.65</ecNumber>
    </recommendedName>
    <component>
        <recommendedName>
            <fullName evidence="1">Phosphatidylserine decarboxylase alpha chain</fullName>
        </recommendedName>
    </component>
    <component>
        <recommendedName>
            <fullName evidence="1">Phosphatidylserine decarboxylase beta chain</fullName>
        </recommendedName>
    </component>
</protein>
<accession>Q07XV9</accession>
<feature type="chain" id="PRO_0000262151" description="Phosphatidylserine decarboxylase beta chain" evidence="1">
    <location>
        <begin position="1"/>
        <end position="251"/>
    </location>
</feature>
<feature type="chain" id="PRO_0000262152" description="Phosphatidylserine decarboxylase alpha chain" evidence="1">
    <location>
        <begin position="252"/>
        <end position="288"/>
    </location>
</feature>
<feature type="active site" description="Charge relay system; for autoendoproteolytic cleavage activity" evidence="1">
    <location>
        <position position="89"/>
    </location>
</feature>
<feature type="active site" description="Charge relay system; for autoendoproteolytic cleavage activity" evidence="1">
    <location>
        <position position="146"/>
    </location>
</feature>
<feature type="active site" description="Charge relay system; for autoendoproteolytic cleavage activity" evidence="1">
    <location>
        <position position="252"/>
    </location>
</feature>
<feature type="active site" description="Schiff-base intermediate with substrate; via pyruvic acid; for decarboxylase activity" evidence="1">
    <location>
        <position position="252"/>
    </location>
</feature>
<feature type="site" description="Cleavage (non-hydrolytic); by autocatalysis" evidence="1">
    <location>
        <begin position="251"/>
        <end position="252"/>
    </location>
</feature>
<feature type="modified residue" description="Pyruvic acid (Ser); by autocatalysis" evidence="1">
    <location>
        <position position="252"/>
    </location>
</feature>
<proteinExistence type="inferred from homology"/>
<evidence type="ECO:0000255" key="1">
    <source>
        <dbReference type="HAMAP-Rule" id="MF_00662"/>
    </source>
</evidence>
<dbReference type="EC" id="4.1.1.65" evidence="1"/>
<dbReference type="EMBL" id="CP000447">
    <property type="protein sequence ID" value="ABI73155.1"/>
    <property type="molecule type" value="Genomic_DNA"/>
</dbReference>
<dbReference type="RefSeq" id="WP_011638758.1">
    <property type="nucleotide sequence ID" value="NC_008345.1"/>
</dbReference>
<dbReference type="SMR" id="Q07XV9"/>
<dbReference type="STRING" id="318167.Sfri_3319"/>
<dbReference type="KEGG" id="sfr:Sfri_3319"/>
<dbReference type="eggNOG" id="COG0688">
    <property type="taxonomic scope" value="Bacteria"/>
</dbReference>
<dbReference type="HOGENOM" id="CLU_029061_4_1_6"/>
<dbReference type="OrthoDB" id="9802030at2"/>
<dbReference type="UniPathway" id="UPA00558">
    <property type="reaction ID" value="UER00616"/>
</dbReference>
<dbReference type="Proteomes" id="UP000000684">
    <property type="component" value="Chromosome"/>
</dbReference>
<dbReference type="GO" id="GO:0005886">
    <property type="term" value="C:plasma membrane"/>
    <property type="evidence" value="ECO:0007669"/>
    <property type="project" value="UniProtKB-SubCell"/>
</dbReference>
<dbReference type="GO" id="GO:0004609">
    <property type="term" value="F:phosphatidylserine decarboxylase activity"/>
    <property type="evidence" value="ECO:0007669"/>
    <property type="project" value="UniProtKB-UniRule"/>
</dbReference>
<dbReference type="GO" id="GO:0006646">
    <property type="term" value="P:phosphatidylethanolamine biosynthetic process"/>
    <property type="evidence" value="ECO:0007669"/>
    <property type="project" value="UniProtKB-UniRule"/>
</dbReference>
<dbReference type="HAMAP" id="MF_00662">
    <property type="entry name" value="PS_decarb_PSD_B_type1"/>
    <property type="match status" value="1"/>
</dbReference>
<dbReference type="InterPro" id="IPR003817">
    <property type="entry name" value="PS_Dcarbxylase"/>
</dbReference>
<dbReference type="InterPro" id="IPR033177">
    <property type="entry name" value="PSD-B"/>
</dbReference>
<dbReference type="InterPro" id="IPR033178">
    <property type="entry name" value="PSD_type1_pro"/>
</dbReference>
<dbReference type="NCBIfam" id="TIGR00163">
    <property type="entry name" value="PS_decarb"/>
    <property type="match status" value="1"/>
</dbReference>
<dbReference type="PANTHER" id="PTHR10067">
    <property type="entry name" value="PHOSPHATIDYLSERINE DECARBOXYLASE"/>
    <property type="match status" value="1"/>
</dbReference>
<dbReference type="PANTHER" id="PTHR10067:SF6">
    <property type="entry name" value="PHOSPHATIDYLSERINE DECARBOXYLASE PROENZYME, MITOCHONDRIAL"/>
    <property type="match status" value="1"/>
</dbReference>
<dbReference type="Pfam" id="PF02666">
    <property type="entry name" value="PS_Dcarbxylase"/>
    <property type="match status" value="1"/>
</dbReference>
<reference key="1">
    <citation type="submission" date="2006-08" db="EMBL/GenBank/DDBJ databases">
        <title>Complete sequence of Shewanella frigidimarina NCIMB 400.</title>
        <authorList>
            <consortium name="US DOE Joint Genome Institute"/>
            <person name="Copeland A."/>
            <person name="Lucas S."/>
            <person name="Lapidus A."/>
            <person name="Barry K."/>
            <person name="Detter J.C."/>
            <person name="Glavina del Rio T."/>
            <person name="Hammon N."/>
            <person name="Israni S."/>
            <person name="Dalin E."/>
            <person name="Tice H."/>
            <person name="Pitluck S."/>
            <person name="Fredrickson J.K."/>
            <person name="Kolker E."/>
            <person name="McCuel L.A."/>
            <person name="DiChristina T."/>
            <person name="Nealson K.H."/>
            <person name="Newman D."/>
            <person name="Tiedje J.M."/>
            <person name="Zhou J."/>
            <person name="Romine M.F."/>
            <person name="Culley D.E."/>
            <person name="Serres M."/>
            <person name="Chertkov O."/>
            <person name="Brettin T."/>
            <person name="Bruce D."/>
            <person name="Han C."/>
            <person name="Tapia R."/>
            <person name="Gilna P."/>
            <person name="Schmutz J."/>
            <person name="Larimer F."/>
            <person name="Land M."/>
            <person name="Hauser L."/>
            <person name="Kyrpides N."/>
            <person name="Mikhailova N."/>
            <person name="Richardson P."/>
        </authorList>
    </citation>
    <scope>NUCLEOTIDE SEQUENCE [LARGE SCALE GENOMIC DNA]</scope>
    <source>
        <strain>NCIMB 400</strain>
    </source>
</reference>
<gene>
    <name evidence="1" type="primary">psd</name>
    <name type="ordered locus">Sfri_3319</name>
</gene>